<reference key="1">
    <citation type="journal article" date="2006" name="Proc. Natl. Acad. Sci. U.S.A.">
        <title>Molecular genetic anatomy of inter- and intraserotype variation in the human bacterial pathogen group A Streptococcus.</title>
        <authorList>
            <person name="Beres S.B."/>
            <person name="Richter E.W."/>
            <person name="Nagiec M.J."/>
            <person name="Sumby P."/>
            <person name="Porcella S.F."/>
            <person name="DeLeo F.R."/>
            <person name="Musser J.M."/>
        </authorList>
    </citation>
    <scope>NUCLEOTIDE SEQUENCE [LARGE SCALE GENOMIC DNA]</scope>
    <source>
        <strain>MGAS9429</strain>
    </source>
</reference>
<feature type="chain" id="PRO_0000301104" description="Peptide deformylase">
    <location>
        <begin position="1"/>
        <end position="204"/>
    </location>
</feature>
<feature type="active site" evidence="1">
    <location>
        <position position="175"/>
    </location>
</feature>
<feature type="binding site" evidence="1">
    <location>
        <position position="131"/>
    </location>
    <ligand>
        <name>Fe cation</name>
        <dbReference type="ChEBI" id="CHEBI:24875"/>
    </ligand>
</feature>
<feature type="binding site" evidence="1">
    <location>
        <position position="174"/>
    </location>
    <ligand>
        <name>Fe cation</name>
        <dbReference type="ChEBI" id="CHEBI:24875"/>
    </ligand>
</feature>
<feature type="binding site" evidence="1">
    <location>
        <position position="178"/>
    </location>
    <ligand>
        <name>Fe cation</name>
        <dbReference type="ChEBI" id="CHEBI:24875"/>
    </ligand>
</feature>
<name>DEF_STRPC</name>
<proteinExistence type="inferred from homology"/>
<keyword id="KW-0378">Hydrolase</keyword>
<keyword id="KW-0408">Iron</keyword>
<keyword id="KW-0479">Metal-binding</keyword>
<keyword id="KW-0648">Protein biosynthesis</keyword>
<sequence>MSAQDKLIKPSHLITMDDIIREGNPTLRAVAKEVSLPLCDEDILLGEKMMQFLKHSQDPVMAEKLGLRAGVGLAAPQIDVSKRIIAVLVPNLPDKEGNPPKEAYSWQEVLYNPKIVSHSVQDAALSDGEGCLSVDRVVEGYVVRHARVTVDYYDKEGQQHRIKLKGYNAIVVQHEIDHINGVLFYDRINAKNPFETKEELLILD</sequence>
<protein>
    <recommendedName>
        <fullName evidence="1">Peptide deformylase</fullName>
        <shortName evidence="1">PDF</shortName>
        <ecNumber evidence="1">3.5.1.88</ecNumber>
    </recommendedName>
    <alternativeName>
        <fullName evidence="1">Polypeptide deformylase</fullName>
    </alternativeName>
</protein>
<evidence type="ECO:0000255" key="1">
    <source>
        <dbReference type="HAMAP-Rule" id="MF_00163"/>
    </source>
</evidence>
<accession>Q1JJW6</accession>
<dbReference type="EC" id="3.5.1.88" evidence="1"/>
<dbReference type="EMBL" id="CP000259">
    <property type="protein sequence ID" value="ABF32857.1"/>
    <property type="molecule type" value="Genomic_DNA"/>
</dbReference>
<dbReference type="RefSeq" id="WP_002982624.1">
    <property type="nucleotide sequence ID" value="NC_008021.1"/>
</dbReference>
<dbReference type="SMR" id="Q1JJW6"/>
<dbReference type="GeneID" id="69901455"/>
<dbReference type="KEGG" id="spk:MGAS9429_Spy1670"/>
<dbReference type="HOGENOM" id="CLU_061901_4_0_9"/>
<dbReference type="Proteomes" id="UP000002433">
    <property type="component" value="Chromosome"/>
</dbReference>
<dbReference type="GO" id="GO:0046872">
    <property type="term" value="F:metal ion binding"/>
    <property type="evidence" value="ECO:0007669"/>
    <property type="project" value="UniProtKB-KW"/>
</dbReference>
<dbReference type="GO" id="GO:0042586">
    <property type="term" value="F:peptide deformylase activity"/>
    <property type="evidence" value="ECO:0007669"/>
    <property type="project" value="UniProtKB-UniRule"/>
</dbReference>
<dbReference type="GO" id="GO:0043686">
    <property type="term" value="P:co-translational protein modification"/>
    <property type="evidence" value="ECO:0007669"/>
    <property type="project" value="TreeGrafter"/>
</dbReference>
<dbReference type="GO" id="GO:0006412">
    <property type="term" value="P:translation"/>
    <property type="evidence" value="ECO:0007669"/>
    <property type="project" value="UniProtKB-UniRule"/>
</dbReference>
<dbReference type="CDD" id="cd00487">
    <property type="entry name" value="Pep_deformylase"/>
    <property type="match status" value="1"/>
</dbReference>
<dbReference type="FunFam" id="3.90.45.10:FF:000002">
    <property type="entry name" value="Peptide deformylase"/>
    <property type="match status" value="1"/>
</dbReference>
<dbReference type="Gene3D" id="3.90.45.10">
    <property type="entry name" value="Peptide deformylase"/>
    <property type="match status" value="1"/>
</dbReference>
<dbReference type="HAMAP" id="MF_00163">
    <property type="entry name" value="Pep_deformylase"/>
    <property type="match status" value="1"/>
</dbReference>
<dbReference type="InterPro" id="IPR023635">
    <property type="entry name" value="Peptide_deformylase"/>
</dbReference>
<dbReference type="InterPro" id="IPR036821">
    <property type="entry name" value="Peptide_deformylase_sf"/>
</dbReference>
<dbReference type="NCBIfam" id="TIGR00079">
    <property type="entry name" value="pept_deformyl"/>
    <property type="match status" value="1"/>
</dbReference>
<dbReference type="PANTHER" id="PTHR10458">
    <property type="entry name" value="PEPTIDE DEFORMYLASE"/>
    <property type="match status" value="1"/>
</dbReference>
<dbReference type="PANTHER" id="PTHR10458:SF8">
    <property type="entry name" value="PEPTIDE DEFORMYLASE 2"/>
    <property type="match status" value="1"/>
</dbReference>
<dbReference type="Pfam" id="PF01327">
    <property type="entry name" value="Pep_deformylase"/>
    <property type="match status" value="1"/>
</dbReference>
<dbReference type="PIRSF" id="PIRSF004749">
    <property type="entry name" value="Pep_def"/>
    <property type="match status" value="1"/>
</dbReference>
<dbReference type="PRINTS" id="PR01576">
    <property type="entry name" value="PDEFORMYLASE"/>
</dbReference>
<dbReference type="SUPFAM" id="SSF56420">
    <property type="entry name" value="Peptide deformylase"/>
    <property type="match status" value="1"/>
</dbReference>
<comment type="function">
    <text evidence="1">Removes the formyl group from the N-terminal Met of newly synthesized proteins. Requires at least a dipeptide for an efficient rate of reaction. N-terminal L-methionine is a prerequisite for activity but the enzyme has broad specificity at other positions.</text>
</comment>
<comment type="catalytic activity">
    <reaction evidence="1">
        <text>N-terminal N-formyl-L-methionyl-[peptide] + H2O = N-terminal L-methionyl-[peptide] + formate</text>
        <dbReference type="Rhea" id="RHEA:24420"/>
        <dbReference type="Rhea" id="RHEA-COMP:10639"/>
        <dbReference type="Rhea" id="RHEA-COMP:10640"/>
        <dbReference type="ChEBI" id="CHEBI:15377"/>
        <dbReference type="ChEBI" id="CHEBI:15740"/>
        <dbReference type="ChEBI" id="CHEBI:49298"/>
        <dbReference type="ChEBI" id="CHEBI:64731"/>
        <dbReference type="EC" id="3.5.1.88"/>
    </reaction>
</comment>
<comment type="cofactor">
    <cofactor evidence="1">
        <name>Fe(2+)</name>
        <dbReference type="ChEBI" id="CHEBI:29033"/>
    </cofactor>
    <text evidence="1">Binds 1 Fe(2+) ion.</text>
</comment>
<comment type="similarity">
    <text evidence="1">Belongs to the polypeptide deformylase family.</text>
</comment>
<organism>
    <name type="scientific">Streptococcus pyogenes serotype M12 (strain MGAS9429)</name>
    <dbReference type="NCBI Taxonomy" id="370551"/>
    <lineage>
        <taxon>Bacteria</taxon>
        <taxon>Bacillati</taxon>
        <taxon>Bacillota</taxon>
        <taxon>Bacilli</taxon>
        <taxon>Lactobacillales</taxon>
        <taxon>Streptococcaceae</taxon>
        <taxon>Streptococcus</taxon>
    </lineage>
</organism>
<gene>
    <name evidence="1" type="primary">def</name>
    <name type="ordered locus">MGAS9429_Spy1670</name>
</gene>